<reference key="1">
    <citation type="journal article" date="2007" name="J. Bacteriol.">
        <title>The complete genome sequence of Bacillus thuringiensis Al Hakam.</title>
        <authorList>
            <person name="Challacombe J.F."/>
            <person name="Altherr M.R."/>
            <person name="Xie G."/>
            <person name="Bhotika S.S."/>
            <person name="Brown N."/>
            <person name="Bruce D."/>
            <person name="Campbell C.S."/>
            <person name="Campbell M.L."/>
            <person name="Chen J."/>
            <person name="Chertkov O."/>
            <person name="Cleland C."/>
            <person name="Dimitrijevic M."/>
            <person name="Doggett N.A."/>
            <person name="Fawcett J.J."/>
            <person name="Glavina T."/>
            <person name="Goodwin L.A."/>
            <person name="Green L.D."/>
            <person name="Han C.S."/>
            <person name="Hill K.K."/>
            <person name="Hitchcock P."/>
            <person name="Jackson P.J."/>
            <person name="Keim P."/>
            <person name="Kewalramani A.R."/>
            <person name="Longmire J."/>
            <person name="Lucas S."/>
            <person name="Malfatti S."/>
            <person name="Martinez D."/>
            <person name="McMurry K."/>
            <person name="Meincke L.J."/>
            <person name="Misra M."/>
            <person name="Moseman B.L."/>
            <person name="Mundt M."/>
            <person name="Munk A.C."/>
            <person name="Okinaka R.T."/>
            <person name="Parson-Quintana B."/>
            <person name="Reilly L.P."/>
            <person name="Richardson P."/>
            <person name="Robinson D.L."/>
            <person name="Saunders E."/>
            <person name="Tapia R."/>
            <person name="Tesmer J.G."/>
            <person name="Thayer N."/>
            <person name="Thompson L.S."/>
            <person name="Tice H."/>
            <person name="Ticknor L.O."/>
            <person name="Wills P.L."/>
            <person name="Gilna P."/>
            <person name="Brettin T.S."/>
        </authorList>
    </citation>
    <scope>NUCLEOTIDE SEQUENCE [LARGE SCALE GENOMIC DNA]</scope>
    <source>
        <strain>Al Hakam</strain>
    </source>
</reference>
<proteinExistence type="inferred from homology"/>
<accession>A0RI44</accession>
<comment type="function">
    <text evidence="1">Catalyzes the dehydration of methylthioribulose-1-phosphate (MTRu-1-P) into 2,3-diketo-5-methylthiopentyl-1-phosphate (DK-MTP-1-P).</text>
</comment>
<comment type="catalytic activity">
    <reaction evidence="1">
        <text>5-(methylsulfanyl)-D-ribulose 1-phosphate = 5-methylsulfanyl-2,3-dioxopentyl phosphate + H2O</text>
        <dbReference type="Rhea" id="RHEA:15549"/>
        <dbReference type="ChEBI" id="CHEBI:15377"/>
        <dbReference type="ChEBI" id="CHEBI:58548"/>
        <dbReference type="ChEBI" id="CHEBI:58828"/>
        <dbReference type="EC" id="4.2.1.109"/>
    </reaction>
</comment>
<comment type="cofactor">
    <cofactor evidence="1">
        <name>Zn(2+)</name>
        <dbReference type="ChEBI" id="CHEBI:29105"/>
    </cofactor>
    <text evidence="1">Binds 1 zinc ion per subunit.</text>
</comment>
<comment type="pathway">
    <text evidence="1">Amino-acid biosynthesis; L-methionine biosynthesis via salvage pathway; L-methionine from S-methyl-5-thio-alpha-D-ribose 1-phosphate: step 2/6.</text>
</comment>
<comment type="subunit">
    <text evidence="1">Homotetramer.</text>
</comment>
<comment type="similarity">
    <text evidence="1">Belongs to the aldolase class II family. MtnB subfamily.</text>
</comment>
<name>MTNB_BACAH</name>
<gene>
    <name evidence="1" type="primary">mtnB</name>
    <name type="ordered locus">BALH_3655</name>
</gene>
<feature type="chain" id="PRO_0000357069" description="Methylthioribulose-1-phosphate dehydratase">
    <location>
        <begin position="1"/>
        <end position="212"/>
    </location>
</feature>
<feature type="binding site" evidence="1">
    <location>
        <position position="97"/>
    </location>
    <ligand>
        <name>Zn(2+)</name>
        <dbReference type="ChEBI" id="CHEBI:29105"/>
    </ligand>
</feature>
<feature type="binding site" evidence="1">
    <location>
        <position position="99"/>
    </location>
    <ligand>
        <name>Zn(2+)</name>
        <dbReference type="ChEBI" id="CHEBI:29105"/>
    </ligand>
</feature>
<dbReference type="EC" id="4.2.1.109" evidence="1"/>
<dbReference type="EMBL" id="CP000485">
    <property type="protein sequence ID" value="ABK86887.1"/>
    <property type="molecule type" value="Genomic_DNA"/>
</dbReference>
<dbReference type="RefSeq" id="WP_000811328.1">
    <property type="nucleotide sequence ID" value="NC_008600.1"/>
</dbReference>
<dbReference type="SMR" id="A0RI44"/>
<dbReference type="KEGG" id="btl:BALH_3655"/>
<dbReference type="HOGENOM" id="CLU_006033_4_1_9"/>
<dbReference type="UniPathway" id="UPA00904">
    <property type="reaction ID" value="UER00875"/>
</dbReference>
<dbReference type="GO" id="GO:0005737">
    <property type="term" value="C:cytoplasm"/>
    <property type="evidence" value="ECO:0007669"/>
    <property type="project" value="InterPro"/>
</dbReference>
<dbReference type="GO" id="GO:0046570">
    <property type="term" value="F:methylthioribulose 1-phosphate dehydratase activity"/>
    <property type="evidence" value="ECO:0007669"/>
    <property type="project" value="UniProtKB-UniRule"/>
</dbReference>
<dbReference type="GO" id="GO:0008270">
    <property type="term" value="F:zinc ion binding"/>
    <property type="evidence" value="ECO:0007669"/>
    <property type="project" value="UniProtKB-UniRule"/>
</dbReference>
<dbReference type="GO" id="GO:0019509">
    <property type="term" value="P:L-methionine salvage from methylthioadenosine"/>
    <property type="evidence" value="ECO:0007669"/>
    <property type="project" value="UniProtKB-UniRule"/>
</dbReference>
<dbReference type="FunFam" id="3.40.225.10:FF:000007">
    <property type="entry name" value="Methylthioribulose-1-phosphate dehydratase"/>
    <property type="match status" value="1"/>
</dbReference>
<dbReference type="Gene3D" id="3.40.225.10">
    <property type="entry name" value="Class II aldolase/adducin N-terminal domain"/>
    <property type="match status" value="1"/>
</dbReference>
<dbReference type="HAMAP" id="MF_01677">
    <property type="entry name" value="Salvage_MtnB"/>
    <property type="match status" value="1"/>
</dbReference>
<dbReference type="InterPro" id="IPR001303">
    <property type="entry name" value="Aldolase_II/adducin_N"/>
</dbReference>
<dbReference type="InterPro" id="IPR036409">
    <property type="entry name" value="Aldolase_II/adducin_N_sf"/>
</dbReference>
<dbReference type="InterPro" id="IPR017714">
    <property type="entry name" value="MethylthioRu-1-P_deHdtase_MtnB"/>
</dbReference>
<dbReference type="NCBIfam" id="NF005244">
    <property type="entry name" value="PRK06754.1"/>
    <property type="match status" value="1"/>
</dbReference>
<dbReference type="NCBIfam" id="TIGR03328">
    <property type="entry name" value="salvage_mtnB"/>
    <property type="match status" value="1"/>
</dbReference>
<dbReference type="PANTHER" id="PTHR10640">
    <property type="entry name" value="METHYLTHIORIBULOSE-1-PHOSPHATE DEHYDRATASE"/>
    <property type="match status" value="1"/>
</dbReference>
<dbReference type="PANTHER" id="PTHR10640:SF7">
    <property type="entry name" value="METHYLTHIORIBULOSE-1-PHOSPHATE DEHYDRATASE"/>
    <property type="match status" value="1"/>
</dbReference>
<dbReference type="Pfam" id="PF00596">
    <property type="entry name" value="Aldolase_II"/>
    <property type="match status" value="1"/>
</dbReference>
<dbReference type="SMART" id="SM01007">
    <property type="entry name" value="Aldolase_II"/>
    <property type="match status" value="1"/>
</dbReference>
<dbReference type="SUPFAM" id="SSF53639">
    <property type="entry name" value="AraD/HMP-PK domain-like"/>
    <property type="match status" value="1"/>
</dbReference>
<sequence>MKQLFRQWYDLSEIKKELTTRNWFPATSGNISIKVSHEPLTFLITASGKDKTKTTPDDFLLVDHLGVPVLETELRPSAETILHTHIYNNTNAGCVLHVHTTDNNVITNLYSDAVTLQNQEIIKALDIWEEGATIHIPIIENHAHIPTLGENFRKHIQGDSGAVLIRNHGITVWGRDSFDAKKRLEAYEFLFQFHIKLLSIQGGVSNGANSYS</sequence>
<keyword id="KW-0028">Amino-acid biosynthesis</keyword>
<keyword id="KW-0456">Lyase</keyword>
<keyword id="KW-0479">Metal-binding</keyword>
<keyword id="KW-0486">Methionine biosynthesis</keyword>
<keyword id="KW-0862">Zinc</keyword>
<organism>
    <name type="scientific">Bacillus thuringiensis (strain Al Hakam)</name>
    <dbReference type="NCBI Taxonomy" id="412694"/>
    <lineage>
        <taxon>Bacteria</taxon>
        <taxon>Bacillati</taxon>
        <taxon>Bacillota</taxon>
        <taxon>Bacilli</taxon>
        <taxon>Bacillales</taxon>
        <taxon>Bacillaceae</taxon>
        <taxon>Bacillus</taxon>
        <taxon>Bacillus cereus group</taxon>
    </lineage>
</organism>
<evidence type="ECO:0000255" key="1">
    <source>
        <dbReference type="HAMAP-Rule" id="MF_01677"/>
    </source>
</evidence>
<protein>
    <recommendedName>
        <fullName evidence="1">Methylthioribulose-1-phosphate dehydratase</fullName>
        <shortName evidence="1">MTRu-1-P dehydratase</shortName>
        <ecNumber evidence="1">4.2.1.109</ecNumber>
    </recommendedName>
</protein>